<name>ELOC_YEAST</name>
<gene>
    <name type="primary">ELC1</name>
    <name type="ordered locus">YPL046C</name>
</gene>
<accession>Q03071</accession>
<accession>D6W3W8</accession>
<accession>O13292</accession>
<protein>
    <recommendedName>
        <fullName>Elongin-C</fullName>
    </recommendedName>
</protein>
<comment type="function">
    <text evidence="6 9">As part of the CRL3 E3 ubiquitin ligase complex; polyubiquitylates monoubiquitylated RNA polymerase II subunit RPO21 to trigger its proteolysis; plays a role in global genomic repair (PubMed:19920177). Prevents degradation of interacting proteins like PCL6 by the proteasome (PubMed:11864988).</text>
</comment>
<comment type="subunit">
    <text evidence="1 2 3 4 5 9 10">Heterodimer with ELA1 (PubMed:10430890, PubMed:10753924, PubMed:10998253, PubMed:11545595, PubMed:23993092). Component of a CRL3 E3 ubiquitin ligase complex consisting of the cullin CUL3, the linker protein ELC1, the substrate receptor ELA1, and the RING protein HRT1 (PubMed:19920177). Interacts with CIN5 (PubMed:10760578). Interacts with PCL6 (PubMed:10760578). Interacts with SNF4 (PubMed:10760578). Interacts with the large RNA polymerase II subunit RPO21 in a manner dependent on DEF1 (PubMed:23993092). Interacts with DEF1 (PubMed:23993092). Interacts with RAD7 (PubMed:19920177). Interacts with RAD16 (PubMed:19920177).</text>
</comment>
<comment type="interaction">
    <interactant intactId="EBI-30154">
        <id>Q03071</id>
    </interactant>
    <interactant intactId="EBI-29191">
        <id>P53861</id>
        <label>ELA1</label>
    </interactant>
    <organismsDiffer>false</organismsDiffer>
    <experiments>6</experiments>
</comment>
<comment type="interaction">
    <interactant intactId="EBI-30154">
        <id>Q03071</id>
    </interactant>
    <interactant intactId="EBI-14780">
        <id>P06779</id>
        <label>RAD7</label>
    </interactant>
    <organismsDiffer>false</organismsDiffer>
    <experiments>5</experiments>
</comment>
<comment type="subcellular location">
    <subcellularLocation>
        <location evidence="7">Cytoplasm</location>
    </subcellularLocation>
    <subcellularLocation>
        <location evidence="7">Nucleus</location>
    </subcellularLocation>
</comment>
<comment type="induction">
    <text evidence="11">During sporulation.</text>
</comment>
<comment type="miscellaneous">
    <text>In contrast to other members of the family it does not integrate a functional E3 ubiquitin complex.</text>
</comment>
<comment type="miscellaneous">
    <text evidence="8">Present with 538 molecules/cell in log phase SD medium.</text>
</comment>
<comment type="similarity">
    <text evidence="12">Belongs to the SKP1 family.</text>
</comment>
<organism>
    <name type="scientific">Saccharomyces cerevisiae (strain ATCC 204508 / S288c)</name>
    <name type="common">Baker's yeast</name>
    <dbReference type="NCBI Taxonomy" id="559292"/>
    <lineage>
        <taxon>Eukaryota</taxon>
        <taxon>Fungi</taxon>
        <taxon>Dikarya</taxon>
        <taxon>Ascomycota</taxon>
        <taxon>Saccharomycotina</taxon>
        <taxon>Saccharomycetes</taxon>
        <taxon>Saccharomycetales</taxon>
        <taxon>Saccharomycetaceae</taxon>
        <taxon>Saccharomyces</taxon>
    </lineage>
</organism>
<keyword id="KW-0002">3D-structure</keyword>
<keyword id="KW-0007">Acetylation</keyword>
<keyword id="KW-0963">Cytoplasm</keyword>
<keyword id="KW-0539">Nucleus</keyword>
<keyword id="KW-0597">Phosphoprotein</keyword>
<keyword id="KW-1185">Reference proteome</keyword>
<evidence type="ECO:0000269" key="1">
    <source>
    </source>
</evidence>
<evidence type="ECO:0000269" key="2">
    <source>
    </source>
</evidence>
<evidence type="ECO:0000269" key="3">
    <source>
    </source>
</evidence>
<evidence type="ECO:0000269" key="4">
    <source>
    </source>
</evidence>
<evidence type="ECO:0000269" key="5">
    <source>
    </source>
</evidence>
<evidence type="ECO:0000269" key="6">
    <source>
    </source>
</evidence>
<evidence type="ECO:0000269" key="7">
    <source>
    </source>
</evidence>
<evidence type="ECO:0000269" key="8">
    <source>
    </source>
</evidence>
<evidence type="ECO:0000269" key="9">
    <source>
    </source>
</evidence>
<evidence type="ECO:0000269" key="10">
    <source>
    </source>
</evidence>
<evidence type="ECO:0000269" key="11">
    <source>
    </source>
</evidence>
<evidence type="ECO:0000305" key="12"/>
<evidence type="ECO:0007744" key="13">
    <source>
    </source>
</evidence>
<evidence type="ECO:0007744" key="14">
    <source>
    </source>
</evidence>
<evidence type="ECO:0007829" key="15">
    <source>
        <dbReference type="PDB" id="1HV2"/>
    </source>
</evidence>
<evidence type="ECO:0007829" key="16">
    <source>
        <dbReference type="PDB" id="5ZB2"/>
    </source>
</evidence>
<feature type="initiator methionine" description="Removed" evidence="13 14">
    <location>
        <position position="1"/>
    </location>
</feature>
<feature type="chain" id="PRO_0000239644" description="Elongin-C">
    <location>
        <begin position="2"/>
        <end position="99"/>
    </location>
</feature>
<feature type="modified residue" description="N-acetylserine" evidence="13 14">
    <location>
        <position position="2"/>
    </location>
</feature>
<feature type="modified residue" description="Phosphoserine" evidence="13">
    <location>
        <position position="2"/>
    </location>
</feature>
<feature type="sequence conflict" description="In Ref. 1; BAA22612." evidence="12" ref="1">
    <original>N</original>
    <variation>Y</variation>
    <location>
        <position position="64"/>
    </location>
</feature>
<feature type="strand" evidence="16">
    <location>
        <begin position="5"/>
        <end position="9"/>
    </location>
</feature>
<feature type="strand" evidence="16">
    <location>
        <begin position="11"/>
        <end position="13"/>
    </location>
</feature>
<feature type="strand" evidence="16">
    <location>
        <begin position="15"/>
        <end position="19"/>
    </location>
</feature>
<feature type="helix" evidence="16">
    <location>
        <begin position="20"/>
        <end position="23"/>
    </location>
</feature>
<feature type="helix" evidence="15">
    <location>
        <begin position="27"/>
        <end position="34"/>
    </location>
</feature>
<feature type="turn" evidence="15">
    <location>
        <begin position="37"/>
        <end position="39"/>
    </location>
</feature>
<feature type="strand" evidence="16">
    <location>
        <begin position="42"/>
        <end position="45"/>
    </location>
</feature>
<feature type="helix" evidence="16">
    <location>
        <begin position="51"/>
        <end position="67"/>
    </location>
</feature>
<feature type="helix" evidence="16">
    <location>
        <begin position="84"/>
        <end position="86"/>
    </location>
</feature>
<feature type="helix" evidence="16">
    <location>
        <begin position="87"/>
        <end position="97"/>
    </location>
</feature>
<reference key="1">
    <citation type="journal article" date="1997" name="Biochem. Biophys. Res. Commun.">
        <title>Molecular cloning of DNAs encoding the regulatory subunits of elongin from Saccharomyces cerevisiae and Drosophila melanogaster.</title>
        <authorList>
            <person name="Aso T."/>
            <person name="Conrad M.N."/>
        </authorList>
    </citation>
    <scope>NUCLEOTIDE SEQUENCE [GENOMIC DNA]</scope>
    <scope>INDUCTION</scope>
</reference>
<reference key="2">
    <citation type="journal article" date="1997" name="Nature">
        <title>The nucleotide sequence of Saccharomyces cerevisiae chromosome XVI.</title>
        <authorList>
            <person name="Bussey H."/>
            <person name="Storms R.K."/>
            <person name="Ahmed A."/>
            <person name="Albermann K."/>
            <person name="Allen E."/>
            <person name="Ansorge W."/>
            <person name="Araujo R."/>
            <person name="Aparicio A."/>
            <person name="Barrell B.G."/>
            <person name="Badcock K."/>
            <person name="Benes V."/>
            <person name="Botstein D."/>
            <person name="Bowman S."/>
            <person name="Brueckner M."/>
            <person name="Carpenter J."/>
            <person name="Cherry J.M."/>
            <person name="Chung E."/>
            <person name="Churcher C.M."/>
            <person name="Coster F."/>
            <person name="Davis K."/>
            <person name="Davis R.W."/>
            <person name="Dietrich F.S."/>
            <person name="Delius H."/>
            <person name="DiPaolo T."/>
            <person name="Dubois E."/>
            <person name="Duesterhoeft A."/>
            <person name="Duncan M."/>
            <person name="Floeth M."/>
            <person name="Fortin N."/>
            <person name="Friesen J.D."/>
            <person name="Fritz C."/>
            <person name="Goffeau A."/>
            <person name="Hall J."/>
            <person name="Hebling U."/>
            <person name="Heumann K."/>
            <person name="Hilbert H."/>
            <person name="Hillier L.W."/>
            <person name="Hunicke-Smith S."/>
            <person name="Hyman R.W."/>
            <person name="Johnston M."/>
            <person name="Kalman S."/>
            <person name="Kleine K."/>
            <person name="Komp C."/>
            <person name="Kurdi O."/>
            <person name="Lashkari D."/>
            <person name="Lew H."/>
            <person name="Lin A."/>
            <person name="Lin D."/>
            <person name="Louis E.J."/>
            <person name="Marathe R."/>
            <person name="Messenguy F."/>
            <person name="Mewes H.-W."/>
            <person name="Mirtipati S."/>
            <person name="Moestl D."/>
            <person name="Mueller-Auer S."/>
            <person name="Namath A."/>
            <person name="Nentwich U."/>
            <person name="Oefner P."/>
            <person name="Pearson D."/>
            <person name="Petel F.X."/>
            <person name="Pohl T.M."/>
            <person name="Purnelle B."/>
            <person name="Rajandream M.A."/>
            <person name="Rechmann S."/>
            <person name="Rieger M."/>
            <person name="Riles L."/>
            <person name="Roberts D."/>
            <person name="Schaefer M."/>
            <person name="Scharfe M."/>
            <person name="Scherens B."/>
            <person name="Schramm S."/>
            <person name="Schroeder M."/>
            <person name="Sdicu A.-M."/>
            <person name="Tettelin H."/>
            <person name="Urrestarazu L.A."/>
            <person name="Ushinsky S."/>
            <person name="Vierendeels F."/>
            <person name="Vissers S."/>
            <person name="Voss H."/>
            <person name="Walsh S.V."/>
            <person name="Wambutt R."/>
            <person name="Wang Y."/>
            <person name="Wedler E."/>
            <person name="Wedler H."/>
            <person name="Winnett E."/>
            <person name="Zhong W.-W."/>
            <person name="Zollner A."/>
            <person name="Vo D.H."/>
            <person name="Hani J."/>
        </authorList>
    </citation>
    <scope>NUCLEOTIDE SEQUENCE [LARGE SCALE GENOMIC DNA]</scope>
    <source>
        <strain>ATCC 204508 / S288c</strain>
    </source>
</reference>
<reference key="3">
    <citation type="journal article" date="2014" name="G3 (Bethesda)">
        <title>The reference genome sequence of Saccharomyces cerevisiae: Then and now.</title>
        <authorList>
            <person name="Engel S.R."/>
            <person name="Dietrich F.S."/>
            <person name="Fisk D.G."/>
            <person name="Binkley G."/>
            <person name="Balakrishnan R."/>
            <person name="Costanzo M.C."/>
            <person name="Dwight S.S."/>
            <person name="Hitz B.C."/>
            <person name="Karra K."/>
            <person name="Nash R.S."/>
            <person name="Weng S."/>
            <person name="Wong E.D."/>
            <person name="Lloyd P."/>
            <person name="Skrzypek M.S."/>
            <person name="Miyasato S.R."/>
            <person name="Simison M."/>
            <person name="Cherry J.M."/>
        </authorList>
    </citation>
    <scope>GENOME REANNOTATION</scope>
    <source>
        <strain>ATCC 204508 / S288c</strain>
    </source>
</reference>
<reference key="4">
    <citation type="journal article" date="2007" name="Genome Res.">
        <title>Approaching a complete repository of sequence-verified protein-encoding clones for Saccharomyces cerevisiae.</title>
        <authorList>
            <person name="Hu Y."/>
            <person name="Rolfs A."/>
            <person name="Bhullar B."/>
            <person name="Murthy T.V.S."/>
            <person name="Zhu C."/>
            <person name="Berger M.F."/>
            <person name="Camargo A.A."/>
            <person name="Kelley F."/>
            <person name="McCarron S."/>
            <person name="Jepson D."/>
            <person name="Richardson A."/>
            <person name="Raphael J."/>
            <person name="Moreira D."/>
            <person name="Taycher E."/>
            <person name="Zuo D."/>
            <person name="Mohr S."/>
            <person name="Kane M.F."/>
            <person name="Williamson J."/>
            <person name="Simpson A.J.G."/>
            <person name="Bulyk M.L."/>
            <person name="Harlow E."/>
            <person name="Marsischky G."/>
            <person name="Kolodner R.D."/>
            <person name="LaBaer J."/>
        </authorList>
    </citation>
    <scope>NUCLEOTIDE SEQUENCE [GENOMIC DNA]</scope>
    <source>
        <strain>ATCC 204508 / S288c</strain>
    </source>
</reference>
<reference key="5">
    <citation type="journal article" date="2000" name="Biochim. Biophys. Acta">
        <title>Novel roles for elongin C in yeast.</title>
        <authorList>
            <person name="Jackson T."/>
            <person name="Kwon E."/>
            <person name="Chachulska A.M."/>
            <person name="Hyman L.E."/>
        </authorList>
    </citation>
    <scope>INTERACTION WITH CIN5; PCL6 AND SNF4</scope>
</reference>
<reference key="6">
    <citation type="journal article" date="2000" name="J. Biol. Chem.">
        <title>Elongin from Saccharomyces cerevisiae.</title>
        <authorList>
            <person name="Koth C.M."/>
            <person name="Botuyan M.V."/>
            <person name="Moreland R.J."/>
            <person name="Jansma D.B."/>
            <person name="Conaway J.W."/>
            <person name="Conaway R.C."/>
            <person name="Chazin W.J."/>
            <person name="Friesen J.D."/>
            <person name="Arrowsmith C.H."/>
            <person name="Edwards A.M."/>
        </authorList>
    </citation>
    <scope>IDENTIFICATION IN THE ELA1-ELC1 COMPLEX</scope>
</reference>
<reference key="7">
    <citation type="journal article" date="2002" name="J. Biol. Chem.">
        <title>Binding to Elongin C inhibits degradation of interacting proteins in yeast.</title>
        <authorList>
            <person name="Hyman L.E."/>
            <person name="Kwon E."/>
            <person name="Ghosh S."/>
            <person name="McGee J."/>
            <person name="Chachulska A.M."/>
            <person name="Jackson T."/>
            <person name="Baricos W.H."/>
        </authorList>
    </citation>
    <scope>FUNCTION</scope>
</reference>
<reference key="8">
    <citation type="journal article" date="2003" name="Nature">
        <title>Global analysis of protein localization in budding yeast.</title>
        <authorList>
            <person name="Huh W.-K."/>
            <person name="Falvo J.V."/>
            <person name="Gerke L.C."/>
            <person name="Carroll A.S."/>
            <person name="Howson R.W."/>
            <person name="Weissman J.S."/>
            <person name="O'Shea E.K."/>
        </authorList>
    </citation>
    <scope>SUBCELLULAR LOCATION [LARGE SCALE ANALYSIS]</scope>
</reference>
<reference key="9">
    <citation type="journal article" date="2003" name="Nature">
        <title>Global analysis of protein expression in yeast.</title>
        <authorList>
            <person name="Ghaemmaghami S."/>
            <person name="Huh W.-K."/>
            <person name="Bower K."/>
            <person name="Howson R.W."/>
            <person name="Belle A."/>
            <person name="Dephoure N."/>
            <person name="O'Shea E.K."/>
            <person name="Weissman J.S."/>
        </authorList>
    </citation>
    <scope>LEVEL OF PROTEIN EXPRESSION [LARGE SCALE ANALYSIS]</scope>
</reference>
<reference key="10">
    <citation type="journal article" date="2005" name="Mol. Cell. Proteomics">
        <title>Quantitative phosphoproteomics applied to the yeast pheromone signaling pathway.</title>
        <authorList>
            <person name="Gruhler A."/>
            <person name="Olsen J.V."/>
            <person name="Mohammed S."/>
            <person name="Mortensen P."/>
            <person name="Faergeman N.J."/>
            <person name="Mann M."/>
            <person name="Jensen O.N."/>
        </authorList>
    </citation>
    <scope>ACETYLATION [LARGE SCALE ANALYSIS] AT SER-2</scope>
    <scope>PHOSPHORYLATION [LARGE SCALE ANALYSIS] AT SER-2</scope>
    <scope>CLEAVAGE OF INITIATOR METHIONINE [LARGE SCALE ANALYSIS]</scope>
    <scope>IDENTIFICATION BY MASS SPECTROMETRY [LARGE SCALE ANALYSIS]</scope>
    <source>
        <strain>YAL6B</strain>
    </source>
</reference>
<reference key="11">
    <citation type="journal article" date="2009" name="Proc. Natl. Acad. Sci. U.S.A.">
        <title>Distinct ubiquitin ligases act sequentially for RNA polymerase II polyubiquitylation.</title>
        <authorList>
            <person name="Harreman M."/>
            <person name="Taschner M."/>
            <person name="Sigurdsson S."/>
            <person name="Anindya R."/>
            <person name="Reid J."/>
            <person name="Somesh B."/>
            <person name="Kong S.E."/>
            <person name="Banks C.A."/>
            <person name="Conaway R.C."/>
            <person name="Conaway J.W."/>
            <person name="Svejstrup J.Q."/>
        </authorList>
    </citation>
    <scope>FUNCTION</scope>
    <scope>IDENTIFICATION IN A CRL3 E3 UBIQUITIN LIGASE COMPLEX</scope>
    <scope>INTERACTION WITH RAD7 AND RAD16</scope>
</reference>
<reference key="12">
    <citation type="journal article" date="2012" name="Proc. Natl. Acad. Sci. U.S.A.">
        <title>N-terminal acetylome analyses and functional insights of the N-terminal acetyltransferase NatB.</title>
        <authorList>
            <person name="Van Damme P."/>
            <person name="Lasa M."/>
            <person name="Polevoda B."/>
            <person name="Gazquez C."/>
            <person name="Elosegui-Artola A."/>
            <person name="Kim D.S."/>
            <person name="De Juan-Pardo E."/>
            <person name="Demeyer K."/>
            <person name="Hole K."/>
            <person name="Larrea E."/>
            <person name="Timmerman E."/>
            <person name="Prieto J."/>
            <person name="Arnesen T."/>
            <person name="Sherman F."/>
            <person name="Gevaert K."/>
            <person name="Aldabe R."/>
        </authorList>
    </citation>
    <scope>ACETYLATION [LARGE SCALE ANALYSIS] AT SER-2</scope>
    <scope>CLEAVAGE OF INITIATOR METHIONINE [LARGE SCALE ANALYSIS]</scope>
    <scope>IDENTIFICATION BY MASS SPECTROMETRY [LARGE SCALE ANALYSIS]</scope>
</reference>
<reference key="13">
    <citation type="journal article" date="2013" name="Cell">
        <title>Proteasome-mediated processing of Def1, a critical step in the cellular response to transcription stress.</title>
        <authorList>
            <person name="Wilson M.D."/>
            <person name="Harreman M."/>
            <person name="Taschner M."/>
            <person name="Reid J."/>
            <person name="Walker J."/>
            <person name="Erdjument-Bromage H."/>
            <person name="Tempst P."/>
            <person name="Svejstrup J.Q."/>
        </authorList>
    </citation>
    <scope>INTERACTION WITH ELA1; DEF1 AND RPO21</scope>
    <scope>IDENTIFICATION BY MASS SPECTROMETRY</scope>
</reference>
<reference key="14">
    <citation type="journal article" date="1999" name="Proc. Natl. Acad. Sci. U.S.A.">
        <title>Binding of elongin A or a von Hippel-Lindau peptide stabilizes the structure of yeast elongin C.</title>
        <authorList>
            <person name="Botuyan M.V."/>
            <person name="Koth C.M."/>
            <person name="Mer G."/>
            <person name="Chakrabartty A."/>
            <person name="Conaway J.W."/>
            <person name="Conaway R.C."/>
            <person name="Edwards A.M."/>
            <person name="Arrowsmith C.H."/>
            <person name="Chazin W.J."/>
        </authorList>
    </citation>
    <scope>STRUCTURE BY NMR IN COMPLEX WITH THE VON HIPPEL-LINDAU PEPTIDE</scope>
    <scope>INTERACTION WITH ELA1</scope>
</reference>
<reference key="15">
    <citation type="journal article" date="2000" name="Biochemistry">
        <title>Biophysical characterization of elongin C from Saccharomyces cerevisiae.</title>
        <authorList>
            <person name="Buchberger A."/>
            <person name="Howard M.J."/>
            <person name="Freund S.M.V."/>
            <person name="Proctor M."/>
            <person name="Butler P.J.G."/>
            <person name="Fersht A.R."/>
            <person name="Bycroft M."/>
        </authorList>
    </citation>
    <scope>STRUCTURE BY NMR</scope>
    <scope>INTERACTION WITH ELA1</scope>
</reference>
<reference key="16">
    <citation type="journal article" date="2001" name="J. Mol. Biol.">
        <title>Solution structure and dynamics of yeast elongin C in complex with a von Hippel-Lindau peptide.</title>
        <authorList>
            <person name="Botuyan M.V."/>
            <person name="Mer G."/>
            <person name="Yi G.-S."/>
            <person name="Koth C.M."/>
            <person name="Case D.A."/>
            <person name="Edwards A.M."/>
            <person name="Chazin W.J."/>
            <person name="Arrowsmith C.H."/>
        </authorList>
    </citation>
    <scope>STRUCTURE BY NMR IN COMPLEX WITH THE VON HIPPEL-LINDAU PEPTIDE</scope>
</reference>
<sequence length="99" mass="11328">MSQDFVTLVSKDDKEYEISRSAAMISPTLKAMIEGPFRESKGRIELKQFDSHILEKAVEYLNYNLKYSGVSEDDDEIPEFEIPTEMSLELLLAADYLSI</sequence>
<dbReference type="EMBL" id="AB007691">
    <property type="protein sequence ID" value="BAA22612.1"/>
    <property type="molecule type" value="Genomic_DNA"/>
</dbReference>
<dbReference type="EMBL" id="U44030">
    <property type="protein sequence ID" value="AAB68175.1"/>
    <property type="molecule type" value="Genomic_DNA"/>
</dbReference>
<dbReference type="EMBL" id="AY558329">
    <property type="protein sequence ID" value="AAS56655.1"/>
    <property type="molecule type" value="Genomic_DNA"/>
</dbReference>
<dbReference type="EMBL" id="BK006949">
    <property type="protein sequence ID" value="DAA11384.1"/>
    <property type="molecule type" value="Genomic_DNA"/>
</dbReference>
<dbReference type="PIR" id="JC5792">
    <property type="entry name" value="JC5792"/>
</dbReference>
<dbReference type="RefSeq" id="NP_015279.1">
    <property type="nucleotide sequence ID" value="NM_001183860.1"/>
</dbReference>
<dbReference type="PDB" id="1HV2">
    <property type="method" value="NMR"/>
    <property type="chains" value="A=1-99"/>
</dbReference>
<dbReference type="PDB" id="5ZB2">
    <property type="method" value="X-ray"/>
    <property type="resolution" value="2.30 A"/>
    <property type="chains" value="B=1-99"/>
</dbReference>
<dbReference type="PDB" id="6R6H">
    <property type="method" value="EM"/>
    <property type="resolution" value="8.40 A"/>
    <property type="chains" value="Q=1-99"/>
</dbReference>
<dbReference type="PDB" id="6R7I">
    <property type="method" value="EM"/>
    <property type="resolution" value="5.90 A"/>
    <property type="chains" value="Q=1-99"/>
</dbReference>
<dbReference type="PDBsum" id="1HV2"/>
<dbReference type="PDBsum" id="5ZB2"/>
<dbReference type="PDBsum" id="6R6H"/>
<dbReference type="PDBsum" id="6R7I"/>
<dbReference type="EMDB" id="EMD-4742"/>
<dbReference type="SMR" id="Q03071"/>
<dbReference type="BioGRID" id="36134">
    <property type="interactions" value="141"/>
</dbReference>
<dbReference type="ComplexPortal" id="CPX-1191">
    <property type="entry name" value="Global genome repair CUL3-RAD7-RAD16-ELC1 ubiquitin ligase complex"/>
</dbReference>
<dbReference type="ComplexPortal" id="CPX-1837">
    <property type="entry name" value="CUL3-HRT1-ELC1-ELA1 ubiquitin ligase complex"/>
</dbReference>
<dbReference type="DIP" id="DIP-6531N"/>
<dbReference type="FunCoup" id="Q03071">
    <property type="interactions" value="794"/>
</dbReference>
<dbReference type="IntAct" id="Q03071">
    <property type="interactions" value="2"/>
</dbReference>
<dbReference type="MINT" id="Q03071"/>
<dbReference type="STRING" id="4932.YPL046C"/>
<dbReference type="iPTMnet" id="Q03071"/>
<dbReference type="PaxDb" id="4932-YPL046C"/>
<dbReference type="PeptideAtlas" id="Q03071"/>
<dbReference type="EnsemblFungi" id="YPL046C_mRNA">
    <property type="protein sequence ID" value="YPL046C"/>
    <property type="gene ID" value="YPL046C"/>
</dbReference>
<dbReference type="GeneID" id="856061"/>
<dbReference type="KEGG" id="sce:YPL046C"/>
<dbReference type="AGR" id="SGD:S000005967"/>
<dbReference type="SGD" id="S000005967">
    <property type="gene designation" value="ELC1"/>
</dbReference>
<dbReference type="VEuPathDB" id="FungiDB:YPL046C"/>
<dbReference type="eggNOG" id="KOG3473">
    <property type="taxonomic scope" value="Eukaryota"/>
</dbReference>
<dbReference type="GeneTree" id="ENSGT00390000011717"/>
<dbReference type="HOGENOM" id="CLU_130038_1_1_1"/>
<dbReference type="InParanoid" id="Q03071"/>
<dbReference type="OMA" id="ELMMAPN"/>
<dbReference type="OrthoDB" id="249087at2759"/>
<dbReference type="BioCyc" id="YEAST:G3O-33959-MONOMER"/>
<dbReference type="Reactome" id="R-SCE-6796648">
    <property type="pathway name" value="TP53 Regulates Transcription of DNA Repair Genes"/>
</dbReference>
<dbReference type="Reactome" id="R-SCE-983168">
    <property type="pathway name" value="Antigen processing: Ubiquitination &amp; Proteasome degradation"/>
</dbReference>
<dbReference type="BioGRID-ORCS" id="856061">
    <property type="hits" value="2 hits in 10 CRISPR screens"/>
</dbReference>
<dbReference type="ChiTaRS" id="ELC1">
    <property type="organism name" value="yeast"/>
</dbReference>
<dbReference type="EvolutionaryTrace" id="Q03071"/>
<dbReference type="PRO" id="PR:Q03071"/>
<dbReference type="Proteomes" id="UP000002311">
    <property type="component" value="Chromosome XVI"/>
</dbReference>
<dbReference type="RNAct" id="Q03071">
    <property type="molecule type" value="protein"/>
</dbReference>
<dbReference type="GO" id="GO:0031463">
    <property type="term" value="C:Cul3-RING ubiquitin ligase complex"/>
    <property type="evidence" value="ECO:0000315"/>
    <property type="project" value="SGD"/>
</dbReference>
<dbReference type="GO" id="GO:0005737">
    <property type="term" value="C:cytoplasm"/>
    <property type="evidence" value="ECO:0007669"/>
    <property type="project" value="UniProtKB-SubCell"/>
</dbReference>
<dbReference type="GO" id="GO:0070449">
    <property type="term" value="C:elongin complex"/>
    <property type="evidence" value="ECO:0000353"/>
    <property type="project" value="SGD"/>
</dbReference>
<dbReference type="GO" id="GO:0000113">
    <property type="term" value="C:nucleotide-excision repair factor 4 complex"/>
    <property type="evidence" value="ECO:0000314"/>
    <property type="project" value="SGD"/>
</dbReference>
<dbReference type="GO" id="GO:0030674">
    <property type="term" value="F:protein-macromolecule adaptor activity"/>
    <property type="evidence" value="ECO:0000318"/>
    <property type="project" value="GO_Central"/>
</dbReference>
<dbReference type="GO" id="GO:0070911">
    <property type="term" value="P:global genome nucleotide-excision repair"/>
    <property type="evidence" value="ECO:0000315"/>
    <property type="project" value="SGD"/>
</dbReference>
<dbReference type="GO" id="GO:0006289">
    <property type="term" value="P:nucleotide-excision repair"/>
    <property type="evidence" value="ECO:0000303"/>
    <property type="project" value="ComplexPortal"/>
</dbReference>
<dbReference type="GO" id="GO:0009411">
    <property type="term" value="P:response to UV"/>
    <property type="evidence" value="ECO:0000314"/>
    <property type="project" value="ComplexPortal"/>
</dbReference>
<dbReference type="GO" id="GO:0006511">
    <property type="term" value="P:ubiquitin-dependent protein catabolic process"/>
    <property type="evidence" value="ECO:0000314"/>
    <property type="project" value="ComplexPortal"/>
</dbReference>
<dbReference type="CDD" id="cd18321">
    <property type="entry name" value="BTB_POZ_EloC"/>
    <property type="match status" value="1"/>
</dbReference>
<dbReference type="DisProt" id="DP01430"/>
<dbReference type="FunFam" id="3.30.710.10:FF:000035">
    <property type="entry name" value="Elongin C transcription elongation factor"/>
    <property type="match status" value="1"/>
</dbReference>
<dbReference type="Gene3D" id="3.30.710.10">
    <property type="entry name" value="Potassium Channel Kv1.1, Chain A"/>
    <property type="match status" value="1"/>
</dbReference>
<dbReference type="InterPro" id="IPR039948">
    <property type="entry name" value="ELC1"/>
</dbReference>
<dbReference type="InterPro" id="IPR001232">
    <property type="entry name" value="SKP1-like"/>
</dbReference>
<dbReference type="InterPro" id="IPR011333">
    <property type="entry name" value="SKP1/BTB/POZ_sf"/>
</dbReference>
<dbReference type="InterPro" id="IPR016073">
    <property type="entry name" value="Skp1_comp_POZ"/>
</dbReference>
<dbReference type="PANTHER" id="PTHR20648">
    <property type="entry name" value="ELONGIN-C"/>
    <property type="match status" value="1"/>
</dbReference>
<dbReference type="Pfam" id="PF03931">
    <property type="entry name" value="Skp1_POZ"/>
    <property type="match status" value="1"/>
</dbReference>
<dbReference type="SMART" id="SM00512">
    <property type="entry name" value="Skp1"/>
    <property type="match status" value="1"/>
</dbReference>
<dbReference type="SUPFAM" id="SSF54695">
    <property type="entry name" value="POZ domain"/>
    <property type="match status" value="1"/>
</dbReference>
<proteinExistence type="evidence at protein level"/>